<feature type="signal peptide" evidence="3">
    <location>
        <begin position="1"/>
        <end position="19"/>
    </location>
</feature>
<feature type="chain" id="PRO_0000025407" description="Glycosylation-dependent cell adhesion molecule 1">
    <location>
        <begin position="20"/>
        <end position="146"/>
    </location>
</feature>
<feature type="region of interest" description="Disordered" evidence="4">
    <location>
        <begin position="25"/>
        <end position="112"/>
    </location>
</feature>
<feature type="compositionally biased region" description="Basic and acidic residues" evidence="4">
    <location>
        <begin position="48"/>
        <end position="60"/>
    </location>
</feature>
<feature type="compositionally biased region" description="Polar residues" evidence="4">
    <location>
        <begin position="74"/>
        <end position="106"/>
    </location>
</feature>
<feature type="modified residue" description="Phosphoserine" evidence="2">
    <location>
        <position position="54"/>
    </location>
</feature>
<feature type="modified residue" description="Phosphoserine" evidence="2">
    <location>
        <position position="59"/>
    </location>
</feature>
<feature type="modified residue" description="Phosphoserine" evidence="2">
    <location>
        <position position="71"/>
    </location>
</feature>
<reference key="1">
    <citation type="journal article" date="1993" name="J. Biol. Chem.">
        <title>Cloning of a rat homologue of mouse GlyCAM 1 reveals conservation of structural domains.</title>
        <authorList>
            <person name="Dowbenko D."/>
            <person name="Watson S.R."/>
            <person name="Lasky L.A."/>
        </authorList>
    </citation>
    <scope>NUCLEOTIDE SEQUENCE [MRNA]</scope>
</reference>
<comment type="function">
    <text>Adhesion molecule that accomplishes cell binding by presenting carbohydrate(s) to the lectin domain of L-selectin.</text>
</comment>
<comment type="subcellular location">
    <subcellularLocation>
        <location>Cell membrane</location>
    </subcellularLocation>
</comment>
<comment type="tissue specificity">
    <text>Lymph nodes. Associated with the lumenal surface of the high endothelial venules of peripheral lymph nodes.</text>
</comment>
<comment type="PTM">
    <text evidence="1">Extensively O-glycosylated.</text>
</comment>
<comment type="similarity">
    <text evidence="5">Belongs to the PP3/GlyCAM-1 family.</text>
</comment>
<proteinExistence type="evidence at transcript level"/>
<keyword id="KW-0130">Cell adhesion</keyword>
<keyword id="KW-1003">Cell membrane</keyword>
<keyword id="KW-0325">Glycoprotein</keyword>
<keyword id="KW-0472">Membrane</keyword>
<keyword id="KW-0597">Phosphoprotein</keyword>
<keyword id="KW-1185">Reference proteome</keyword>
<keyword id="KW-0732">Signal</keyword>
<organism>
    <name type="scientific">Rattus norvegicus</name>
    <name type="common">Rat</name>
    <dbReference type="NCBI Taxonomy" id="10116"/>
    <lineage>
        <taxon>Eukaryota</taxon>
        <taxon>Metazoa</taxon>
        <taxon>Chordata</taxon>
        <taxon>Craniata</taxon>
        <taxon>Vertebrata</taxon>
        <taxon>Euteleostomi</taxon>
        <taxon>Mammalia</taxon>
        <taxon>Eutheria</taxon>
        <taxon>Euarchontoglires</taxon>
        <taxon>Glires</taxon>
        <taxon>Rodentia</taxon>
        <taxon>Myomorpha</taxon>
        <taxon>Muroidea</taxon>
        <taxon>Muridae</taxon>
        <taxon>Murinae</taxon>
        <taxon>Rattus</taxon>
    </lineage>
</organism>
<dbReference type="EMBL" id="L08100">
    <property type="protein sequence ID" value="AAA41249.1"/>
    <property type="molecule type" value="mRNA"/>
</dbReference>
<dbReference type="PIR" id="A47167">
    <property type="entry name" value="A47167"/>
</dbReference>
<dbReference type="RefSeq" id="NP_036926.1">
    <property type="nucleotide sequence ID" value="NM_012794.1"/>
</dbReference>
<dbReference type="FunCoup" id="Q04807">
    <property type="interactions" value="130"/>
</dbReference>
<dbReference type="STRING" id="10116.ENSRNOP00000052145"/>
<dbReference type="PhosphoSitePlus" id="Q04807"/>
<dbReference type="PaxDb" id="10116-ENSRNOP00000052145"/>
<dbReference type="GeneID" id="25258"/>
<dbReference type="KEGG" id="rno:25258"/>
<dbReference type="UCSC" id="RGD:2712">
    <property type="organism name" value="rat"/>
</dbReference>
<dbReference type="AGR" id="RGD:2712"/>
<dbReference type="CTD" id="644076"/>
<dbReference type="RGD" id="2712">
    <property type="gene designation" value="Glycam1"/>
</dbReference>
<dbReference type="eggNOG" id="ENOG502TDVV">
    <property type="taxonomic scope" value="Eukaryota"/>
</dbReference>
<dbReference type="InParanoid" id="Q04807"/>
<dbReference type="OrthoDB" id="9796712at2759"/>
<dbReference type="PhylomeDB" id="Q04807"/>
<dbReference type="PRO" id="PR:Q04807"/>
<dbReference type="Proteomes" id="UP000002494">
    <property type="component" value="Unplaced"/>
</dbReference>
<dbReference type="GO" id="GO:0005886">
    <property type="term" value="C:plasma membrane"/>
    <property type="evidence" value="ECO:0007669"/>
    <property type="project" value="UniProtKB-SubCell"/>
</dbReference>
<dbReference type="GO" id="GO:0007155">
    <property type="term" value="P:cell adhesion"/>
    <property type="evidence" value="ECO:0000304"/>
    <property type="project" value="RGD"/>
</dbReference>
<dbReference type="InterPro" id="IPR007906">
    <property type="entry name" value="GLYCAM-1"/>
</dbReference>
<dbReference type="Pfam" id="PF05242">
    <property type="entry name" value="GLYCAM-1"/>
    <property type="match status" value="1"/>
</dbReference>
<gene>
    <name type="primary">Glycam1</name>
</gene>
<sequence length="146" mass="15440">MKFFTVLLFASLAATSLAAVPGSKDELHLRTQPTDAIPASQFTPSSHISKESTSSKDLSKESFIFNEELVSEDNVGTESTKPQSQEAQDGLRSGSSQQEETTSAATSEGKLTMLSQAVQKELGKVIEGFISGVEDIISGASGTVRP</sequence>
<protein>
    <recommendedName>
        <fullName>Glycosylation-dependent cell adhesion molecule 1</fullName>
        <shortName>GlyCAM-1</shortName>
    </recommendedName>
    <alternativeName>
        <fullName>Endothelial ligand FOR L-selectin</fullName>
    </alternativeName>
    <alternativeName>
        <fullName>SGP50</fullName>
    </alternativeName>
    <alternativeName>
        <fullName>Sulfated 50 kDa glycoprotein</fullName>
    </alternativeName>
</protein>
<accession>Q04807</accession>
<evidence type="ECO:0000250" key="1"/>
<evidence type="ECO:0000250" key="2">
    <source>
        <dbReference type="UniProtKB" id="P80195"/>
    </source>
</evidence>
<evidence type="ECO:0000255" key="3"/>
<evidence type="ECO:0000256" key="4">
    <source>
        <dbReference type="SAM" id="MobiDB-lite"/>
    </source>
</evidence>
<evidence type="ECO:0000305" key="5"/>
<name>GLCM1_RAT</name>